<accession>P15600</accession>
<keyword id="KW-0249">Electron transport</keyword>
<keyword id="KW-0472">Membrane</keyword>
<keyword id="KW-0496">Mitochondrion</keyword>
<keyword id="KW-0999">Mitochondrion inner membrane</keyword>
<keyword id="KW-0520">NAD</keyword>
<keyword id="KW-0560">Oxidoreductase</keyword>
<keyword id="KW-0679">Respiratory chain</keyword>
<keyword id="KW-1278">Translocase</keyword>
<keyword id="KW-0813">Transport</keyword>
<keyword id="KW-0830">Ubiquinone</keyword>
<feature type="chain" id="PRO_0000118647" description="NADH-ubiquinone oxidoreductase subunit 9">
    <location>
        <begin position="1"/>
        <end position="209"/>
    </location>
</feature>
<reference key="1">
    <citation type="journal article" date="1990" name="Nucleic Acids Res.">
        <title>Nucleotide sequence of the mitochondrial genome of Paramecium.</title>
        <authorList>
            <person name="Pritchard A.E."/>
            <person name="Seilhamer J.J."/>
            <person name="Mahalingam R."/>
            <person name="Sable C.L."/>
            <person name="Venuti S.E."/>
            <person name="Cummings D.J."/>
        </authorList>
    </citation>
    <scope>NUCLEOTIDE SEQUENCE [GENOMIC DNA]</scope>
    <source>
        <strain>Stock 51</strain>
    </source>
</reference>
<reference key="2">
    <citation type="journal article" date="1986" name="Gene">
        <title>Paramecium mitochondrial DNA sequences and RNA transcripts for cytochrome oxidase subunit I, URF1, and three ORFs adjacent to the replication origin.</title>
        <authorList>
            <person name="Pritchard A.E."/>
            <person name="Seilhamer J.J."/>
            <person name="Cummings D.J."/>
        </authorList>
    </citation>
    <scope>NUCLEOTIDE SEQUENCE [GENOMIC DNA]</scope>
</reference>
<evidence type="ECO:0000250" key="1"/>
<evidence type="ECO:0000305" key="2"/>
<gene>
    <name type="primary">NAD9</name>
</gene>
<geneLocation type="mitochondrion"/>
<protein>
    <recommendedName>
        <fullName>NADH-ubiquinone oxidoreductase subunit 9</fullName>
        <ecNumber>7.1.1.2</ecNumber>
    </recommendedName>
    <alternativeName>
        <fullName>Protein P1</fullName>
    </alternativeName>
</protein>
<sequence length="209" mass="23529">MSLNQIQRACFCSGGVKKKKKPKYRFGFPMALYFFFEKLNFSYWTSTTVNPNHYVCVLPSEAGQALASVLGGELFLAKSQLVEATAFDLTGQGAEAGDLLVFLRNNGVVLSYSFYFFLLKKRITFFLHGGDKVSSLESFYSNANWLEREISEMFRGSNLLKKESRNLLLDYGSSFNPFLKKFPSTGHAEVVFNSFLKTTAYVQTAGVEL</sequence>
<comment type="function">
    <text evidence="1">Core subunit of the mitochondrial membrane respiratory chain NADH dehydrogenase (Complex I) that is believed to belong to the minimal assembly required for catalysis. Complex I functions in the transfer of electrons from NADH to the respiratory chain. The immediate electron acceptor for the enzyme is believed to be ubiquinone (By similarity).</text>
</comment>
<comment type="catalytic activity">
    <reaction>
        <text>a ubiquinone + NADH + 5 H(+)(in) = a ubiquinol + NAD(+) + 4 H(+)(out)</text>
        <dbReference type="Rhea" id="RHEA:29091"/>
        <dbReference type="Rhea" id="RHEA-COMP:9565"/>
        <dbReference type="Rhea" id="RHEA-COMP:9566"/>
        <dbReference type="ChEBI" id="CHEBI:15378"/>
        <dbReference type="ChEBI" id="CHEBI:16389"/>
        <dbReference type="ChEBI" id="CHEBI:17976"/>
        <dbReference type="ChEBI" id="CHEBI:57540"/>
        <dbReference type="ChEBI" id="CHEBI:57945"/>
        <dbReference type="EC" id="7.1.1.2"/>
    </reaction>
</comment>
<comment type="subunit">
    <text>Complex I is composed of about 30 different subunits.</text>
</comment>
<comment type="subcellular location">
    <subcellularLocation>
        <location>Mitochondrion inner membrane</location>
    </subcellularLocation>
</comment>
<comment type="similarity">
    <text evidence="2">Belongs to the complex I 30 kDa subunit family.</text>
</comment>
<organism>
    <name type="scientific">Paramecium tetraurelia</name>
    <dbReference type="NCBI Taxonomy" id="5888"/>
    <lineage>
        <taxon>Eukaryota</taxon>
        <taxon>Sar</taxon>
        <taxon>Alveolata</taxon>
        <taxon>Ciliophora</taxon>
        <taxon>Intramacronucleata</taxon>
        <taxon>Oligohymenophorea</taxon>
        <taxon>Peniculida</taxon>
        <taxon>Parameciidae</taxon>
        <taxon>Paramecium</taxon>
    </lineage>
</organism>
<name>NDUS3_PARTE</name>
<dbReference type="EC" id="7.1.1.2"/>
<dbReference type="EMBL" id="X15917">
    <property type="protein sequence ID" value="CAA34058.1"/>
    <property type="molecule type" value="Genomic_DNA"/>
</dbReference>
<dbReference type="EMBL" id="M15275">
    <property type="protein sequence ID" value="AAA79259.1"/>
    <property type="molecule type" value="Genomic_DNA"/>
</dbReference>
<dbReference type="PIR" id="S07725">
    <property type="entry name" value="S07725"/>
</dbReference>
<dbReference type="SMR" id="P15600"/>
<dbReference type="GO" id="GO:0005743">
    <property type="term" value="C:mitochondrial inner membrane"/>
    <property type="evidence" value="ECO:0007669"/>
    <property type="project" value="UniProtKB-SubCell"/>
</dbReference>
<dbReference type="GO" id="GO:0008137">
    <property type="term" value="F:NADH dehydrogenase (ubiquinone) activity"/>
    <property type="evidence" value="ECO:0007669"/>
    <property type="project" value="UniProtKB-EC"/>
</dbReference>
<dbReference type="Gene3D" id="3.30.460.80">
    <property type="entry name" value="NADH:ubiquinone oxidoreductase, 30kDa subunit"/>
    <property type="match status" value="1"/>
</dbReference>
<dbReference type="InterPro" id="IPR037232">
    <property type="entry name" value="NADH_quin_OxRdtase_su_C/D-like"/>
</dbReference>
<dbReference type="InterPro" id="IPR001268">
    <property type="entry name" value="NADH_UbQ_OxRdtase_30kDa_su"/>
</dbReference>
<dbReference type="InterPro" id="IPR020396">
    <property type="entry name" value="NADH_UbQ_OxRdtase_CS"/>
</dbReference>
<dbReference type="Pfam" id="PF00329">
    <property type="entry name" value="Complex1_30kDa"/>
    <property type="match status" value="1"/>
</dbReference>
<dbReference type="SUPFAM" id="SSF143243">
    <property type="entry name" value="Nqo5-like"/>
    <property type="match status" value="1"/>
</dbReference>
<dbReference type="PROSITE" id="PS00542">
    <property type="entry name" value="COMPLEX1_30K"/>
    <property type="match status" value="1"/>
</dbReference>
<proteinExistence type="inferred from homology"/>